<dbReference type="EMBL" id="AAFI02000100">
    <property type="protein sequence ID" value="EAL63749.1"/>
    <property type="status" value="ALT_SEQ"/>
    <property type="molecule type" value="Genomic_DNA"/>
</dbReference>
<dbReference type="EMBL" id="DQ793219">
    <property type="protein sequence ID" value="ABG81508.1"/>
    <property type="molecule type" value="mRNA"/>
</dbReference>
<dbReference type="EMBL" id="M19467">
    <property type="protein sequence ID" value="AAA67431.1"/>
    <property type="molecule type" value="Genomic_DNA"/>
</dbReference>
<dbReference type="RefSeq" id="XP_637266.1">
    <property type="nucleotide sequence ID" value="XM_632174.1"/>
</dbReference>
<dbReference type="FunCoup" id="Q54KF7">
    <property type="interactions" value="2"/>
</dbReference>
<dbReference type="IntAct" id="Q54KF7">
    <property type="interactions" value="1"/>
</dbReference>
<dbReference type="MINT" id="Q54KF7"/>
<dbReference type="STRING" id="44689.Q54KF7"/>
<dbReference type="TCDB" id="9.B.87.1.39">
    <property type="family name" value="the selenoprotein p receptor (selp-receptor) family"/>
</dbReference>
<dbReference type="GlyCosmos" id="Q54KF7">
    <property type="glycosylation" value="6 sites, No reported glycans"/>
</dbReference>
<dbReference type="GlyGen" id="Q54KF7">
    <property type="glycosylation" value="9 sites"/>
</dbReference>
<dbReference type="PaxDb" id="44689-DDB0233521"/>
<dbReference type="ABCD" id="Q54KF7">
    <property type="antibodies" value="6 sequenced antibodies"/>
</dbReference>
<dbReference type="EnsemblProtists" id="EAL63749">
    <property type="protein sequence ID" value="EAL63749"/>
    <property type="gene ID" value="DDB_G0287363"/>
</dbReference>
<dbReference type="GeneID" id="8626097"/>
<dbReference type="KEGG" id="ddi:DDB_G0287363"/>
<dbReference type="dictyBase" id="DDB_G0287363">
    <property type="gene designation" value="sibA"/>
</dbReference>
<dbReference type="VEuPathDB" id="AmoebaDB:DDB_G0287363"/>
<dbReference type="eggNOG" id="KOG1218">
    <property type="taxonomic scope" value="Eukaryota"/>
</dbReference>
<dbReference type="InParanoid" id="Q54KF7"/>
<dbReference type="PhylomeDB" id="Q54KF7"/>
<dbReference type="PRO" id="PR:Q54KF7"/>
<dbReference type="Proteomes" id="UP000002195">
    <property type="component" value="Chromosome 5"/>
</dbReference>
<dbReference type="GO" id="GO:0009986">
    <property type="term" value="C:cell surface"/>
    <property type="evidence" value="ECO:0000314"/>
    <property type="project" value="dictyBase"/>
</dbReference>
<dbReference type="GO" id="GO:0005769">
    <property type="term" value="C:early endosome"/>
    <property type="evidence" value="ECO:0000314"/>
    <property type="project" value="dictyBase"/>
</dbReference>
<dbReference type="GO" id="GO:0005886">
    <property type="term" value="C:plasma membrane"/>
    <property type="evidence" value="ECO:0000314"/>
    <property type="project" value="dictyBase"/>
</dbReference>
<dbReference type="GO" id="GO:0055037">
    <property type="term" value="C:recycling endosome"/>
    <property type="evidence" value="ECO:0000314"/>
    <property type="project" value="dictyBase"/>
</dbReference>
<dbReference type="GO" id="GO:0005509">
    <property type="term" value="F:calcium ion binding"/>
    <property type="evidence" value="ECO:0007669"/>
    <property type="project" value="InterPro"/>
</dbReference>
<dbReference type="GO" id="GO:0031589">
    <property type="term" value="P:cell-substrate adhesion"/>
    <property type="evidence" value="ECO:0000315"/>
    <property type="project" value="dictyBase"/>
</dbReference>
<dbReference type="GO" id="GO:0006909">
    <property type="term" value="P:phagocytosis"/>
    <property type="evidence" value="ECO:0000315"/>
    <property type="project" value="dictyBase"/>
</dbReference>
<dbReference type="CDD" id="cd00064">
    <property type="entry name" value="FU"/>
    <property type="match status" value="1"/>
</dbReference>
<dbReference type="Gene3D" id="2.60.40.3440">
    <property type="match status" value="1"/>
</dbReference>
<dbReference type="Gene3D" id="2.60.40.10">
    <property type="entry name" value="Immunoglobulins"/>
    <property type="match status" value="1"/>
</dbReference>
<dbReference type="Gene3D" id="2.170.300.10">
    <property type="entry name" value="Tie2 ligand-binding domain superfamily"/>
    <property type="match status" value="1"/>
</dbReference>
<dbReference type="InterPro" id="IPR015919">
    <property type="entry name" value="Cadherin-like_sf"/>
</dbReference>
<dbReference type="InterPro" id="IPR000742">
    <property type="entry name" value="EGF-like_dom"/>
</dbReference>
<dbReference type="InterPro" id="IPR006212">
    <property type="entry name" value="Furin_repeat"/>
</dbReference>
<dbReference type="InterPro" id="IPR013783">
    <property type="entry name" value="Ig-like_fold"/>
</dbReference>
<dbReference type="InterPro" id="IPR056851">
    <property type="entry name" value="Ig_SibA-E"/>
</dbReference>
<dbReference type="InterPro" id="IPR056847">
    <property type="entry name" value="Ig_SibA-E_2nd"/>
</dbReference>
<dbReference type="InterPro" id="IPR056849">
    <property type="entry name" value="Ig_SibA-E_3rd"/>
</dbReference>
<dbReference type="InterPro" id="IPR052108">
    <property type="entry name" value="MEGF/SIB"/>
</dbReference>
<dbReference type="InterPro" id="IPR056844">
    <property type="entry name" value="SibA-E_N"/>
</dbReference>
<dbReference type="InterPro" id="IPR002035">
    <property type="entry name" value="VWF_A"/>
</dbReference>
<dbReference type="InterPro" id="IPR036465">
    <property type="entry name" value="vWFA_dom_sf"/>
</dbReference>
<dbReference type="PANTHER" id="PTHR24035">
    <property type="entry name" value="MULTIPLE EPIDERMAL GROWTH FACTOR-LIKE DOMAINS PROTEIN"/>
    <property type="match status" value="1"/>
</dbReference>
<dbReference type="PANTHER" id="PTHR24035:SF109">
    <property type="entry name" value="PROTEIN DRAPER"/>
    <property type="match status" value="1"/>
</dbReference>
<dbReference type="Pfam" id="PF17963">
    <property type="entry name" value="Big_9"/>
    <property type="match status" value="2"/>
</dbReference>
<dbReference type="Pfam" id="PF24619">
    <property type="entry name" value="Ig_SibA"/>
    <property type="match status" value="1"/>
</dbReference>
<dbReference type="Pfam" id="PF24908">
    <property type="entry name" value="Ig_SIBA-E_2nd"/>
    <property type="match status" value="1"/>
</dbReference>
<dbReference type="Pfam" id="PF24910">
    <property type="entry name" value="Ig_SIBA-E_3rd"/>
    <property type="match status" value="1"/>
</dbReference>
<dbReference type="Pfam" id="PF24907">
    <property type="entry name" value="SIBA-E_N"/>
    <property type="match status" value="1"/>
</dbReference>
<dbReference type="Pfam" id="PF24909">
    <property type="entry name" value="vWA_SIBA-E"/>
    <property type="match status" value="1"/>
</dbReference>
<dbReference type="SUPFAM" id="SSF49313">
    <property type="entry name" value="Cadherin-like"/>
    <property type="match status" value="1"/>
</dbReference>
<dbReference type="SUPFAM" id="SSF53300">
    <property type="entry name" value="vWA-like"/>
    <property type="match status" value="1"/>
</dbReference>
<dbReference type="PROSITE" id="PS00022">
    <property type="entry name" value="EGF_1"/>
    <property type="match status" value="1"/>
</dbReference>
<dbReference type="PROSITE" id="PS01186">
    <property type="entry name" value="EGF_2"/>
    <property type="match status" value="2"/>
</dbReference>
<dbReference type="PROSITE" id="PS50026">
    <property type="entry name" value="EGF_3"/>
    <property type="match status" value="1"/>
</dbReference>
<dbReference type="PROSITE" id="PS50234">
    <property type="entry name" value="VWFA"/>
    <property type="match status" value="1"/>
</dbReference>
<evidence type="ECO:0000255" key="1"/>
<evidence type="ECO:0000255" key="2">
    <source>
        <dbReference type="PROSITE-ProRule" id="PRU00076"/>
    </source>
</evidence>
<evidence type="ECO:0000255" key="3">
    <source>
        <dbReference type="PROSITE-ProRule" id="PRU00219"/>
    </source>
</evidence>
<evidence type="ECO:0000269" key="4">
    <source>
    </source>
</evidence>
<evidence type="ECO:0000305" key="5"/>
<protein>
    <recommendedName>
        <fullName>Integrin beta-like protein A</fullName>
    </recommendedName>
    <alternativeName>
        <fullName>109 gene 1 protein</fullName>
    </alternativeName>
</protein>
<sequence length="1927" mass="208361">MNRILTLFILFISLFIVCEATHFRFGTMSWMPMGSHNTIKFSSNYAFRIGFFKKFNKGCNVGDVVKVGDLDLGDDKTKVDVNLVVTSVNQADDWFTGEFSYTHTYNPIKLGGKAVTYKVVFTDCCRIKSLLNNAEGSWYISTSVVVDPNQGSDVSTFNRSPVSGMVPIITLNRDKNNQFLIAASDPNGDTLTYSLSNAYTMNQPSGLSIDSSKGIVSFKPTVSGFYSTQIMIKDTKGAYVVVDFLINSVIEPGVCHPSCSNGGNTCNGNSGCKSCKGTDSNGNTCSSFPPVFVYPPTPTDGSLLAYEVNKTNSFSIQCKTEEKSKTVFIQPANIPLAATLTSSDQNKQVSTLTYSMLPQLKHIGVYVISAYCTDNKGLVSTITSFSISVEKPICGHGTNKPGGGCNCETGWDPEKNCYECLKGHYGEKCDPVDPCVNGESNEGSQGNGKCTCYYGWEGKNCDIKVNQVCNANKENVVLDSSVAKSSYINPNFAQVYLNTDPSKQALTLSSKLSIPETIDKFEVLVLVDSQPSIVEYWDNFKKYSSDLTKNLQDISETVSIGLGLFSDAKTNGYSFVLKKSIGNGLSGLDDKDKAPASSYSTKNSLIALTSAAEFPAGWSTGSIKIIVLLTDNDYSATAQEVSKFTSTLISKSILPVVVSFNDNQNWDTLFKNQGFGSTKKTSNAKGNDWVSVATSAIKDVLSKAVVKAIDDTKGFLTLPSATTISIEDSKDYTIPIQIKYPQGQSDIPQNPSVSYSVVGFGITRIVINYNSAPTALGYSIETKQNVNYNFKLSGSDVDGNTLTIKFKTIPAASVGVIQADGVTIEQGDSFSIEKTFTFKPATNYYTKSTNDKFTFVANDGCLDSNEATVEIKITHVNQAPSCSSLSGSAISVTGLNTPKSFSLQGSDIETDSNLKIVFGDLTAISAYGNIKSGSNVVSTGSSVQLSSGSASLTFTQTKDIANDKEITVDFKVNDGSLDSSSSCSFKVKFVHFNKPPVAFAVTPLTIRQNSELKITISASDSDSDSVIFTLDDLKLGGGDSFFKCDDRSQLTAPFTTQPVSISGGVASFSEICYSSPLVNANSYASLVFFANDGQLSSDKFKVLININGDRPNAPPVVNQIPNFTMNEDDISNELVIDGIDPDELDQGKLKGIIIQKPTNGVILVKSGSSTSEAPIIGNAPYKIFYKPNPLYYGTDSFSYTVEDSMGERDATPKTTQITVQHVNHAPTLSIDPYDFTSQTSEKTLELTPKDIDLIDTVFHCTIVKLPATAIIKTSAGKVIDTVPTDLSDNKYIITSNNNIYNDFSDSFDAKCYDSSNAVSNIATGPITFRYINVPPKAESSDETLNQDSSVSFSVKATDLEDNSNVRAVIRSLPAKGTLTIKSTGKAAEISSTYAIDDFVYTPVAGYSNWDKPGHVGPADSFNFVAKDSKNDISSNIGTVSFFIEPRNPPTYEGLAVLYTKENTDLPFSISGIVGNGGSNVFLRIKSIVSRGSLYATHCMGTEGCMSEPNPVDININFTSQPYTFSFTPIEYENGDNYAIIEFVLYDKFNGQEVESQKYTIIINVIPVNQAPEVILIEHTLSTLPNNVIAFDKFKTVKMETNSYVIIKYDGTDIDDPKEKLKSYIVSPPLRGLLYVYDKDAKDGLGKLIKKDDTFVPVAQDGFWYIVFVPTPGSSGDGYVRIPISMVDFLGDISVPVTVAVDVSKKNIPPFITIENKNYTSLANTSIVVTGVSFDDPDSKYNDVELILSLVNKDGDLVSNKIATFSLSQQSKAKCTKHSEFAQFTCRSNKKTLNALISTMYVNHQGGGSYRLKVFVNDLGYSSPASIRDKNHMTATDYVELDVTKPEVTTTKENNNKTVLTGAIAGAAAGAGLLAAGAWFLLKKSAPPTDAFFGEGAFADGAVSTNPMYEESGRSAINPLYEASSENL</sequence>
<reference key="1">
    <citation type="journal article" date="2005" name="Nature">
        <title>The genome of the social amoeba Dictyostelium discoideum.</title>
        <authorList>
            <person name="Eichinger L."/>
            <person name="Pachebat J.A."/>
            <person name="Gloeckner G."/>
            <person name="Rajandream M.A."/>
            <person name="Sucgang R."/>
            <person name="Berriman M."/>
            <person name="Song J."/>
            <person name="Olsen R."/>
            <person name="Szafranski K."/>
            <person name="Xu Q."/>
            <person name="Tunggal B."/>
            <person name="Kummerfeld S."/>
            <person name="Madera M."/>
            <person name="Konfortov B.A."/>
            <person name="Rivero F."/>
            <person name="Bankier A.T."/>
            <person name="Lehmann R."/>
            <person name="Hamlin N."/>
            <person name="Davies R."/>
            <person name="Gaudet P."/>
            <person name="Fey P."/>
            <person name="Pilcher K."/>
            <person name="Chen G."/>
            <person name="Saunders D."/>
            <person name="Sodergren E.J."/>
            <person name="Davis P."/>
            <person name="Kerhornou A."/>
            <person name="Nie X."/>
            <person name="Hall N."/>
            <person name="Anjard C."/>
            <person name="Hemphill L."/>
            <person name="Bason N."/>
            <person name="Farbrother P."/>
            <person name="Desany B."/>
            <person name="Just E."/>
            <person name="Morio T."/>
            <person name="Rost R."/>
            <person name="Churcher C.M."/>
            <person name="Cooper J."/>
            <person name="Haydock S."/>
            <person name="van Driessche N."/>
            <person name="Cronin A."/>
            <person name="Goodhead I."/>
            <person name="Muzny D.M."/>
            <person name="Mourier T."/>
            <person name="Pain A."/>
            <person name="Lu M."/>
            <person name="Harper D."/>
            <person name="Lindsay R."/>
            <person name="Hauser H."/>
            <person name="James K.D."/>
            <person name="Quiles M."/>
            <person name="Madan Babu M."/>
            <person name="Saito T."/>
            <person name="Buchrieser C."/>
            <person name="Wardroper A."/>
            <person name="Felder M."/>
            <person name="Thangavelu M."/>
            <person name="Johnson D."/>
            <person name="Knights A."/>
            <person name="Loulseged H."/>
            <person name="Mungall K.L."/>
            <person name="Oliver K."/>
            <person name="Price C."/>
            <person name="Quail M.A."/>
            <person name="Urushihara H."/>
            <person name="Hernandez J."/>
            <person name="Rabbinowitsch E."/>
            <person name="Steffen D."/>
            <person name="Sanders M."/>
            <person name="Ma J."/>
            <person name="Kohara Y."/>
            <person name="Sharp S."/>
            <person name="Simmonds M.N."/>
            <person name="Spiegler S."/>
            <person name="Tivey A."/>
            <person name="Sugano S."/>
            <person name="White B."/>
            <person name="Walker D."/>
            <person name="Woodward J.R."/>
            <person name="Winckler T."/>
            <person name="Tanaka Y."/>
            <person name="Shaulsky G."/>
            <person name="Schleicher M."/>
            <person name="Weinstock G.M."/>
            <person name="Rosenthal A."/>
            <person name="Cox E.C."/>
            <person name="Chisholm R.L."/>
            <person name="Gibbs R.A."/>
            <person name="Loomis W.F."/>
            <person name="Platzer M."/>
            <person name="Kay R.R."/>
            <person name="Williams J.G."/>
            <person name="Dear P.H."/>
            <person name="Noegel A.A."/>
            <person name="Barrell B.G."/>
            <person name="Kuspa A."/>
        </authorList>
    </citation>
    <scope>NUCLEOTIDE SEQUENCE [LARGE SCALE GENOMIC DNA]</scope>
    <source>
        <strain>AX4</strain>
    </source>
</reference>
<reference key="2">
    <citation type="journal article" date="2006" name="EMBO Rep.">
        <title>An adhesion molecule in free-living Dictyostelium amoebae with integrin beta features.</title>
        <authorList>
            <person name="Cornillon S."/>
            <person name="Gebbie L."/>
            <person name="Benghezal M."/>
            <person name="Nair P."/>
            <person name="Keller S."/>
            <person name="Wehrle-Haller B."/>
            <person name="Charette S.J."/>
            <person name="Brueckert F."/>
            <person name="Letourneur F."/>
            <person name="Cosson P."/>
        </authorList>
    </citation>
    <scope>NUCLEOTIDE SEQUENCE [MRNA] OF 1-48</scope>
    <scope>FUNCTION</scope>
    <scope>INTERACTION WITH TALA</scope>
</reference>
<reference key="3">
    <citation type="journal article" date="1989" name="J. Mol. Biol.">
        <title>Organization of a gene family developmentally regulated during Dictyostelium discoideum spore germination.</title>
        <authorList>
            <person name="Giorda R."/>
            <person name="Ohmachi T."/>
            <person name="Ennis H.L."/>
        </authorList>
    </citation>
    <scope>NUCLEOTIDE SEQUENCE [GENOMIC DNA] OF 1781-1927</scope>
    <source>
        <strain>AX3</strain>
    </source>
</reference>
<reference key="4">
    <citation type="journal article" date="2006" name="J. Proteome Res.">
        <title>Identification of novel centrosomal proteins in Dictyostelium discoideum by comparative proteomic approaches.</title>
        <authorList>
            <person name="Reinders Y."/>
            <person name="Schulz I."/>
            <person name="Graef R."/>
            <person name="Sickmann A."/>
        </authorList>
    </citation>
    <scope>IDENTIFICATION BY MASS SPECTROMETRY [LARGE SCALE ANALYSIS]</scope>
</reference>
<keyword id="KW-0130">Cell adhesion</keyword>
<keyword id="KW-1015">Disulfide bond</keyword>
<keyword id="KW-0245">EGF-like domain</keyword>
<keyword id="KW-0325">Glycoprotein</keyword>
<keyword id="KW-0472">Membrane</keyword>
<keyword id="KW-1185">Reference proteome</keyword>
<keyword id="KW-0732">Signal</keyword>
<keyword id="KW-0812">Transmembrane</keyword>
<keyword id="KW-1133">Transmembrane helix</keyword>
<comment type="function">
    <text evidence="4">Implicated in cellular adhesion to substrate or phagocytic particles.</text>
</comment>
<comment type="subunit">
    <text evidence="4">Interacts with talA/talin.</text>
</comment>
<comment type="subcellular location">
    <subcellularLocation>
        <location evidence="5">Membrane</location>
        <topology evidence="5">Single-pass type I membrane protein</topology>
    </subcellularLocation>
</comment>
<comment type="similarity">
    <text evidence="5">Belongs to the SIB family.</text>
</comment>
<comment type="sequence caution" evidence="5">
    <conflict type="erroneous gene model prediction">
        <sequence resource="EMBL-CDS" id="EAL63749"/>
    </conflict>
</comment>
<organism>
    <name type="scientific">Dictyostelium discoideum</name>
    <name type="common">Social amoeba</name>
    <dbReference type="NCBI Taxonomy" id="44689"/>
    <lineage>
        <taxon>Eukaryota</taxon>
        <taxon>Amoebozoa</taxon>
        <taxon>Evosea</taxon>
        <taxon>Eumycetozoa</taxon>
        <taxon>Dictyostelia</taxon>
        <taxon>Dictyosteliales</taxon>
        <taxon>Dictyosteliaceae</taxon>
        <taxon>Dictyostelium</taxon>
    </lineage>
</organism>
<gene>
    <name type="primary">sibA</name>
    <name type="ORF">DDB_G0287363</name>
</gene>
<feature type="signal peptide" evidence="1">
    <location>
        <begin position="1"/>
        <end position="20"/>
    </location>
</feature>
<feature type="chain" id="PRO_0000312331" description="Integrin beta-like protein A">
    <location>
        <begin position="21"/>
        <end position="1927"/>
    </location>
</feature>
<feature type="topological domain" description="Extracellular" evidence="1">
    <location>
        <begin position="21"/>
        <end position="1860"/>
    </location>
</feature>
<feature type="transmembrane region" description="Helical" evidence="1">
    <location>
        <begin position="1861"/>
        <end position="1881"/>
    </location>
</feature>
<feature type="topological domain" description="Cytoplasmic" evidence="1">
    <location>
        <begin position="1882"/>
        <end position="1927"/>
    </location>
</feature>
<feature type="domain" description="EGF-like" evidence="2">
    <location>
        <begin position="425"/>
        <end position="462"/>
    </location>
</feature>
<feature type="domain" description="VWFA" evidence="3">
    <location>
        <begin position="522"/>
        <end position="709"/>
    </location>
</feature>
<feature type="glycosylation site" description="N-linked (GlcNAc...) asparagine" evidence="1">
    <location>
        <position position="309"/>
    </location>
</feature>
<feature type="glycosylation site" description="N-linked (GlcNAc...) asparagine" evidence="1">
    <location>
        <position position="1122"/>
    </location>
</feature>
<feature type="glycosylation site" description="N-linked (GlcNAc...) asparagine" evidence="1">
    <location>
        <position position="1516"/>
    </location>
</feature>
<feature type="glycosylation site" description="N-linked (GlcNAc...) asparagine" evidence="1">
    <location>
        <position position="1717"/>
    </location>
</feature>
<feature type="glycosylation site" description="N-linked (GlcNAc...) asparagine" evidence="1">
    <location>
        <position position="1723"/>
    </location>
</feature>
<feature type="glycosylation site" description="N-linked (GlcNAc...) asparagine" evidence="1">
    <location>
        <position position="1855"/>
    </location>
</feature>
<feature type="disulfide bond" evidence="2">
    <location>
        <begin position="435"/>
        <end position="450"/>
    </location>
</feature>
<feature type="disulfide bond" evidence="2">
    <location>
        <begin position="452"/>
        <end position="461"/>
    </location>
</feature>
<proteinExistence type="evidence at protein level"/>
<accession>Q54KF7</accession>
<accession>Q0PL85</accession>
<accession>Q23848</accession>
<name>SIBA_DICDI</name>